<keyword id="KW-0238">DNA-binding</keyword>
<keyword id="KW-0479">Metal-binding</keyword>
<keyword id="KW-0539">Nucleus</keyword>
<keyword id="KW-1185">Reference proteome</keyword>
<keyword id="KW-0677">Repeat</keyword>
<keyword id="KW-0804">Transcription</keyword>
<keyword id="KW-0805">Transcription regulation</keyword>
<keyword id="KW-0862">Zinc</keyword>
<keyword id="KW-0863">Zinc-finger</keyword>
<reference key="1">
    <citation type="journal article" date="2013" name="Nature">
        <title>The zebrafish reference genome sequence and its relationship to the human genome.</title>
        <authorList>
            <person name="Howe K."/>
            <person name="Clark M.D."/>
            <person name="Torroja C.F."/>
            <person name="Torrance J."/>
            <person name="Berthelot C."/>
            <person name="Muffato M."/>
            <person name="Collins J.E."/>
            <person name="Humphray S."/>
            <person name="McLaren K."/>
            <person name="Matthews L."/>
            <person name="McLaren S."/>
            <person name="Sealy I."/>
            <person name="Caccamo M."/>
            <person name="Churcher C."/>
            <person name="Scott C."/>
            <person name="Barrett J.C."/>
            <person name="Koch R."/>
            <person name="Rauch G.J."/>
            <person name="White S."/>
            <person name="Chow W."/>
            <person name="Kilian B."/>
            <person name="Quintais L.T."/>
            <person name="Guerra-Assuncao J.A."/>
            <person name="Zhou Y."/>
            <person name="Gu Y."/>
            <person name="Yen J."/>
            <person name="Vogel J.H."/>
            <person name="Eyre T."/>
            <person name="Redmond S."/>
            <person name="Banerjee R."/>
            <person name="Chi J."/>
            <person name="Fu B."/>
            <person name="Langley E."/>
            <person name="Maguire S.F."/>
            <person name="Laird G.K."/>
            <person name="Lloyd D."/>
            <person name="Kenyon E."/>
            <person name="Donaldson S."/>
            <person name="Sehra H."/>
            <person name="Almeida-King J."/>
            <person name="Loveland J."/>
            <person name="Trevanion S."/>
            <person name="Jones M."/>
            <person name="Quail M."/>
            <person name="Willey D."/>
            <person name="Hunt A."/>
            <person name="Burton J."/>
            <person name="Sims S."/>
            <person name="McLay K."/>
            <person name="Plumb B."/>
            <person name="Davis J."/>
            <person name="Clee C."/>
            <person name="Oliver K."/>
            <person name="Clark R."/>
            <person name="Riddle C."/>
            <person name="Elliot D."/>
            <person name="Threadgold G."/>
            <person name="Harden G."/>
            <person name="Ware D."/>
            <person name="Begum S."/>
            <person name="Mortimore B."/>
            <person name="Kerry G."/>
            <person name="Heath P."/>
            <person name="Phillimore B."/>
            <person name="Tracey A."/>
            <person name="Corby N."/>
            <person name="Dunn M."/>
            <person name="Johnson C."/>
            <person name="Wood J."/>
            <person name="Clark S."/>
            <person name="Pelan S."/>
            <person name="Griffiths G."/>
            <person name="Smith M."/>
            <person name="Glithero R."/>
            <person name="Howden P."/>
            <person name="Barker N."/>
            <person name="Lloyd C."/>
            <person name="Stevens C."/>
            <person name="Harley J."/>
            <person name="Holt K."/>
            <person name="Panagiotidis G."/>
            <person name="Lovell J."/>
            <person name="Beasley H."/>
            <person name="Henderson C."/>
            <person name="Gordon D."/>
            <person name="Auger K."/>
            <person name="Wright D."/>
            <person name="Collins J."/>
            <person name="Raisen C."/>
            <person name="Dyer L."/>
            <person name="Leung K."/>
            <person name="Robertson L."/>
            <person name="Ambridge K."/>
            <person name="Leongamornlert D."/>
            <person name="McGuire S."/>
            <person name="Gilderthorp R."/>
            <person name="Griffiths C."/>
            <person name="Manthravadi D."/>
            <person name="Nichol S."/>
            <person name="Barker G."/>
            <person name="Whitehead S."/>
            <person name="Kay M."/>
            <person name="Brown J."/>
            <person name="Murnane C."/>
            <person name="Gray E."/>
            <person name="Humphries M."/>
            <person name="Sycamore N."/>
            <person name="Barker D."/>
            <person name="Saunders D."/>
            <person name="Wallis J."/>
            <person name="Babbage A."/>
            <person name="Hammond S."/>
            <person name="Mashreghi-Mohammadi M."/>
            <person name="Barr L."/>
            <person name="Martin S."/>
            <person name="Wray P."/>
            <person name="Ellington A."/>
            <person name="Matthews N."/>
            <person name="Ellwood M."/>
            <person name="Woodmansey R."/>
            <person name="Clark G."/>
            <person name="Cooper J."/>
            <person name="Tromans A."/>
            <person name="Grafham D."/>
            <person name="Skuce C."/>
            <person name="Pandian R."/>
            <person name="Andrews R."/>
            <person name="Harrison E."/>
            <person name="Kimberley A."/>
            <person name="Garnett J."/>
            <person name="Fosker N."/>
            <person name="Hall R."/>
            <person name="Garner P."/>
            <person name="Kelly D."/>
            <person name="Bird C."/>
            <person name="Palmer S."/>
            <person name="Gehring I."/>
            <person name="Berger A."/>
            <person name="Dooley C.M."/>
            <person name="Ersan-Urun Z."/>
            <person name="Eser C."/>
            <person name="Geiger H."/>
            <person name="Geisler M."/>
            <person name="Karotki L."/>
            <person name="Kirn A."/>
            <person name="Konantz J."/>
            <person name="Konantz M."/>
            <person name="Oberlander M."/>
            <person name="Rudolph-Geiger S."/>
            <person name="Teucke M."/>
            <person name="Lanz C."/>
            <person name="Raddatz G."/>
            <person name="Osoegawa K."/>
            <person name="Zhu B."/>
            <person name="Rapp A."/>
            <person name="Widaa S."/>
            <person name="Langford C."/>
            <person name="Yang F."/>
            <person name="Schuster S.C."/>
            <person name="Carter N.P."/>
            <person name="Harrow J."/>
            <person name="Ning Z."/>
            <person name="Herrero J."/>
            <person name="Searle S.M."/>
            <person name="Enright A."/>
            <person name="Geisler R."/>
            <person name="Plasterk R.H."/>
            <person name="Lee C."/>
            <person name="Westerfield M."/>
            <person name="de Jong P.J."/>
            <person name="Zon L.I."/>
            <person name="Postlethwait J.H."/>
            <person name="Nusslein-Volhard C."/>
            <person name="Hubbard T.J."/>
            <person name="Roest Crollius H."/>
            <person name="Rogers J."/>
            <person name="Stemple D.L."/>
        </authorList>
    </citation>
    <scope>NUCLEOTIDE SEQUENCE [LARGE SCALE GENOMIC DNA]</scope>
    <source>
        <strain>Tuebingen</strain>
    </source>
</reference>
<reference key="2">
    <citation type="submission" date="2006-06" db="EMBL/GenBank/DDBJ databases">
        <authorList>
            <consortium name="NIH - Zebrafish Gene Collection (ZGC) project"/>
        </authorList>
    </citation>
    <scope>NUCLEOTIDE SEQUENCE [LARGE SCALE MRNA]</scope>
    <source>
        <tissue>Eye</tissue>
    </source>
</reference>
<proteinExistence type="evidence at transcript level"/>
<evidence type="ECO:0000256" key="1">
    <source>
        <dbReference type="SAM" id="MobiDB-lite"/>
    </source>
</evidence>
<evidence type="ECO:0000305" key="2"/>
<organism>
    <name type="scientific">Danio rerio</name>
    <name type="common">Zebrafish</name>
    <name type="synonym">Brachydanio rerio</name>
    <dbReference type="NCBI Taxonomy" id="7955"/>
    <lineage>
        <taxon>Eukaryota</taxon>
        <taxon>Metazoa</taxon>
        <taxon>Chordata</taxon>
        <taxon>Craniata</taxon>
        <taxon>Vertebrata</taxon>
        <taxon>Euteleostomi</taxon>
        <taxon>Actinopterygii</taxon>
        <taxon>Neopterygii</taxon>
        <taxon>Teleostei</taxon>
        <taxon>Ostariophysi</taxon>
        <taxon>Cypriniformes</taxon>
        <taxon>Danionidae</taxon>
        <taxon>Danioninae</taxon>
        <taxon>Danio</taxon>
    </lineage>
</organism>
<protein>
    <recommendedName>
        <fullName>Zinc finger protein 511</fullName>
    </recommendedName>
</protein>
<name>ZN511_DANRE</name>
<comment type="function">
    <text>May be involved in transcriptional regulation.</text>
</comment>
<comment type="subcellular location">
    <subcellularLocation>
        <location evidence="2">Nucleus</location>
    </subcellularLocation>
</comment>
<comment type="similarity">
    <text evidence="2">Belongs to the krueppel C2H2-type zinc-finger protein family.</text>
</comment>
<accession>Q7ZZ00</accession>
<accession>Q1ED05</accession>
<gene>
    <name type="primary">znf511</name>
</gene>
<sequence>MLQPEIIEFLASTTPQILAKNIPVTENRESKRHDIQQKAEAGEEKAVSPFEFRPQRLRFAVEDEYFEDGDINRHMYLQNIVTSFVDDKQPPTISEFRCHIAGCKQLFDTLEGYEHHYNALHRNVCSNCKRSFPSNRLLEIHILEWHDSLFQIMAEKQCMYECLVEGCGLKFKTSKERKDHLIRTHSYPADFRFDKSKKIGRTTEKKTQQKKDAHMEVSATVLQQESSESMDFSLTPEPVETEPMQAANLKPRYSYKVPSSICFGQGSVRGFRGRRKK</sequence>
<feature type="chain" id="PRO_0000353092" description="Zinc finger protein 511">
    <location>
        <begin position="1"/>
        <end position="277"/>
    </location>
</feature>
<feature type="zinc finger region" description="C2H2-type 1">
    <location>
        <begin position="96"/>
        <end position="121"/>
    </location>
</feature>
<feature type="zinc finger region" description="C2H2-type 2">
    <location>
        <begin position="123"/>
        <end position="146"/>
    </location>
</feature>
<feature type="zinc finger region" description="C2H2-type 3">
    <location>
        <begin position="160"/>
        <end position="185"/>
    </location>
</feature>
<feature type="region of interest" description="Disordered" evidence="1">
    <location>
        <begin position="225"/>
        <end position="244"/>
    </location>
</feature>
<feature type="sequence conflict" description="In Ref. 2; AAI17601." evidence="2" ref="2">
    <original>F</original>
    <variation>L</variation>
    <location>
        <position position="9"/>
    </location>
</feature>
<feature type="sequence conflict" description="In Ref. 2; AAI17601." evidence="2" ref="2">
    <location>
        <position position="18"/>
    </location>
</feature>
<feature type="sequence conflict" description="In Ref. 2; AAI17601." evidence="2" ref="2">
    <original>K</original>
    <variation>R</variation>
    <location>
        <position position="45"/>
    </location>
</feature>
<dbReference type="EMBL" id="AL831745">
    <property type="protein sequence ID" value="CAD60843.1"/>
    <property type="molecule type" value="Genomic_DNA"/>
</dbReference>
<dbReference type="EMBL" id="BC117600">
    <property type="protein sequence ID" value="AAI17601.1"/>
    <property type="molecule type" value="mRNA"/>
</dbReference>
<dbReference type="RefSeq" id="NP_001004531.1">
    <property type="nucleotide sequence ID" value="NM_001004531.1"/>
</dbReference>
<dbReference type="FunCoup" id="Q7ZZ00">
    <property type="interactions" value="359"/>
</dbReference>
<dbReference type="STRING" id="7955.ENSDARP00000001399"/>
<dbReference type="Ensembl" id="ENSDART00000000831">
    <property type="protein sequence ID" value="ENSDARP00000001399"/>
    <property type="gene ID" value="ENSDARG00000000760"/>
</dbReference>
<dbReference type="GeneID" id="368916"/>
<dbReference type="KEGG" id="dre:368916"/>
<dbReference type="AGR" id="ZFIN:ZDB-GENE-030616-621"/>
<dbReference type="CTD" id="118472"/>
<dbReference type="ZFIN" id="ZDB-GENE-030616-621">
    <property type="gene designation" value="znf511"/>
</dbReference>
<dbReference type="HOGENOM" id="CLU_092647_0_0_1"/>
<dbReference type="InParanoid" id="Q7ZZ00"/>
<dbReference type="OMA" id="LEDYQHH"/>
<dbReference type="OrthoDB" id="18440at2759"/>
<dbReference type="PhylomeDB" id="Q7ZZ00"/>
<dbReference type="TreeFam" id="TF323277"/>
<dbReference type="PRO" id="PR:Q7ZZ00"/>
<dbReference type="Proteomes" id="UP000000437">
    <property type="component" value="Chromosome 13"/>
</dbReference>
<dbReference type="Bgee" id="ENSDARG00000000760">
    <property type="expression patterns" value="Expressed in ovary and 28 other cell types or tissues"/>
</dbReference>
<dbReference type="GO" id="GO:0005634">
    <property type="term" value="C:nucleus"/>
    <property type="evidence" value="ECO:0007669"/>
    <property type="project" value="UniProtKB-SubCell"/>
</dbReference>
<dbReference type="GO" id="GO:0003677">
    <property type="term" value="F:DNA binding"/>
    <property type="evidence" value="ECO:0007669"/>
    <property type="project" value="UniProtKB-KW"/>
</dbReference>
<dbReference type="GO" id="GO:0008270">
    <property type="term" value="F:zinc ion binding"/>
    <property type="evidence" value="ECO:0007669"/>
    <property type="project" value="UniProtKB-KW"/>
</dbReference>
<dbReference type="Gene3D" id="3.30.160.60">
    <property type="entry name" value="Classic Zinc Finger"/>
    <property type="match status" value="1"/>
</dbReference>
<dbReference type="InterPro" id="IPR039258">
    <property type="entry name" value="ZNF511"/>
</dbReference>
<dbReference type="InterPro" id="IPR013087">
    <property type="entry name" value="Znf_C2H2_type"/>
</dbReference>
<dbReference type="PANTHER" id="PTHR21354">
    <property type="entry name" value="ZINC FINGER PROTEIN 511"/>
    <property type="match status" value="1"/>
</dbReference>
<dbReference type="PANTHER" id="PTHR21354:SF0">
    <property type="entry name" value="ZINC FINGER PROTEIN 511"/>
    <property type="match status" value="1"/>
</dbReference>
<dbReference type="Pfam" id="PF00096">
    <property type="entry name" value="zf-C2H2"/>
    <property type="match status" value="1"/>
</dbReference>
<dbReference type="SMART" id="SM00355">
    <property type="entry name" value="ZnF_C2H2"/>
    <property type="match status" value="3"/>
</dbReference>
<dbReference type="PROSITE" id="PS00028">
    <property type="entry name" value="ZINC_FINGER_C2H2_1"/>
    <property type="match status" value="3"/>
</dbReference>